<evidence type="ECO:0000255" key="1">
    <source>
        <dbReference type="HAMAP-Rule" id="MF_03122"/>
    </source>
</evidence>
<evidence type="ECO:0000305" key="2"/>
<accession>P0CQ59</accession>
<accession>Q55YD0</accession>
<accession>Q5KLL1</accession>
<organism>
    <name type="scientific">Cryptococcus neoformans var. neoformans serotype D (strain B-3501A)</name>
    <name type="common">Filobasidiella neoformans</name>
    <dbReference type="NCBI Taxonomy" id="283643"/>
    <lineage>
        <taxon>Eukaryota</taxon>
        <taxon>Fungi</taxon>
        <taxon>Dikarya</taxon>
        <taxon>Basidiomycota</taxon>
        <taxon>Agaricomycotina</taxon>
        <taxon>Tremellomycetes</taxon>
        <taxon>Tremellales</taxon>
        <taxon>Cryptococcaceae</taxon>
        <taxon>Cryptococcus</taxon>
        <taxon>Cryptococcus neoformans species complex</taxon>
    </lineage>
</organism>
<comment type="subunit">
    <text evidence="1">Component of the small ribosomal subunit. Mature ribosomes consist of a small (40S) and a large (60S) subunit. The 40S subunit contains about 33 different proteins and 1 molecule of RNA (18S). The 60S subunit contains about 49 different proteins and 3 molecules of RNA (25S, 5.8S and 5S).</text>
</comment>
<comment type="subcellular location">
    <subcellularLocation>
        <location evidence="1">Cytoplasm</location>
    </subcellularLocation>
</comment>
<comment type="similarity">
    <text evidence="1">Belongs to the eukaryotic ribosomal protein eS1 family.</text>
</comment>
<feature type="initiator methionine" description="Removed" evidence="1">
    <location>
        <position position="1"/>
    </location>
</feature>
<feature type="chain" id="PRO_0000410240" description="Small ribosomal subunit protein eS1">
    <location>
        <begin position="2"/>
        <end position="259"/>
    </location>
</feature>
<feature type="modified residue" description="N-acetylalanine; partial" evidence="1">
    <location>
        <position position="2"/>
    </location>
</feature>
<proteinExistence type="inferred from homology"/>
<sequence>MAVGKNKRLSKGKKGIKKKVVDPFTRKEWYDIKAPSFFENRNAGKTLVNRTQGLKNANDSLKGRVLELSLADLNNDQEQSFRKIKLRVEDVAGKSCLTSFYGMDFTTDKLRSIVRKWQSLVEAHVDVKTTDGYVLRLFAIGFTKRQSNQVKKTTYAQSSQLKEIRAKMVEIMRREAEGSDLKELVQKFVPESIGREIEKAAKGIYPLHNVYVRKAKIVKTPKIDMSKLLESHGEAMDANTGSKVVKSGEFVEPEILESV</sequence>
<gene>
    <name evidence="1" type="primary">RPS1</name>
    <name type="ordered locus">CNBB0860</name>
</gene>
<reference key="1">
    <citation type="journal article" date="2005" name="Science">
        <title>The genome of the basidiomycetous yeast and human pathogen Cryptococcus neoformans.</title>
        <authorList>
            <person name="Loftus B.J."/>
            <person name="Fung E."/>
            <person name="Roncaglia P."/>
            <person name="Rowley D."/>
            <person name="Amedeo P."/>
            <person name="Bruno D."/>
            <person name="Vamathevan J."/>
            <person name="Miranda M."/>
            <person name="Anderson I.J."/>
            <person name="Fraser J.A."/>
            <person name="Allen J.E."/>
            <person name="Bosdet I.E."/>
            <person name="Brent M.R."/>
            <person name="Chiu R."/>
            <person name="Doering T.L."/>
            <person name="Donlin M.J."/>
            <person name="D'Souza C.A."/>
            <person name="Fox D.S."/>
            <person name="Grinberg V."/>
            <person name="Fu J."/>
            <person name="Fukushima M."/>
            <person name="Haas B.J."/>
            <person name="Huang J.C."/>
            <person name="Janbon G."/>
            <person name="Jones S.J.M."/>
            <person name="Koo H.L."/>
            <person name="Krzywinski M.I."/>
            <person name="Kwon-Chung K.J."/>
            <person name="Lengeler K.B."/>
            <person name="Maiti R."/>
            <person name="Marra M.A."/>
            <person name="Marra R.E."/>
            <person name="Mathewson C.A."/>
            <person name="Mitchell T.G."/>
            <person name="Pertea M."/>
            <person name="Riggs F.R."/>
            <person name="Salzberg S.L."/>
            <person name="Schein J.E."/>
            <person name="Shvartsbeyn A."/>
            <person name="Shin H."/>
            <person name="Shumway M."/>
            <person name="Specht C.A."/>
            <person name="Suh B.B."/>
            <person name="Tenney A."/>
            <person name="Utterback T.R."/>
            <person name="Wickes B.L."/>
            <person name="Wortman J.R."/>
            <person name="Wye N.H."/>
            <person name="Kronstad J.W."/>
            <person name="Lodge J.K."/>
            <person name="Heitman J."/>
            <person name="Davis R.W."/>
            <person name="Fraser C.M."/>
            <person name="Hyman R.W."/>
        </authorList>
    </citation>
    <scope>NUCLEOTIDE SEQUENCE [LARGE SCALE GENOMIC DNA]</scope>
    <source>
        <strain>B-3501A</strain>
    </source>
</reference>
<name>RS3A_CRYNB</name>
<keyword id="KW-0007">Acetylation</keyword>
<keyword id="KW-0963">Cytoplasm</keyword>
<keyword id="KW-0687">Ribonucleoprotein</keyword>
<keyword id="KW-0689">Ribosomal protein</keyword>
<protein>
    <recommendedName>
        <fullName evidence="1">Small ribosomal subunit protein eS1</fullName>
    </recommendedName>
    <alternativeName>
        <fullName evidence="2">40S ribosomal protein S1</fullName>
    </alternativeName>
</protein>
<dbReference type="EMBL" id="AAEY01000006">
    <property type="protein sequence ID" value="EAL22865.1"/>
    <property type="molecule type" value="Genomic_DNA"/>
</dbReference>
<dbReference type="RefSeq" id="XP_777512.1">
    <property type="nucleotide sequence ID" value="XM_772419.1"/>
</dbReference>
<dbReference type="SMR" id="P0CQ59"/>
<dbReference type="EnsemblFungi" id="AAW41673">
    <property type="protein sequence ID" value="AAW41673"/>
    <property type="gene ID" value="CNB04880"/>
</dbReference>
<dbReference type="GeneID" id="4934176"/>
<dbReference type="KEGG" id="cnb:CNBB0860"/>
<dbReference type="VEuPathDB" id="FungiDB:CNBB0860"/>
<dbReference type="HOGENOM" id="CLU_062507_0_0_1"/>
<dbReference type="OrthoDB" id="3927at5206"/>
<dbReference type="GO" id="GO:0022627">
    <property type="term" value="C:cytosolic small ribosomal subunit"/>
    <property type="evidence" value="ECO:0007669"/>
    <property type="project" value="UniProtKB-UniRule"/>
</dbReference>
<dbReference type="GO" id="GO:0003735">
    <property type="term" value="F:structural constituent of ribosome"/>
    <property type="evidence" value="ECO:0007669"/>
    <property type="project" value="UniProtKB-UniRule"/>
</dbReference>
<dbReference type="GO" id="GO:0006412">
    <property type="term" value="P:translation"/>
    <property type="evidence" value="ECO:0007669"/>
    <property type="project" value="UniProtKB-UniRule"/>
</dbReference>
<dbReference type="HAMAP" id="MF_03122">
    <property type="entry name" value="Ribosomal_eS1_euk"/>
    <property type="match status" value="1"/>
</dbReference>
<dbReference type="InterPro" id="IPR001593">
    <property type="entry name" value="Ribosomal_eS1"/>
</dbReference>
<dbReference type="InterPro" id="IPR018281">
    <property type="entry name" value="Ribosomal_eS1_CS"/>
</dbReference>
<dbReference type="InterPro" id="IPR027500">
    <property type="entry name" value="Ribosomal_eS1_euk"/>
</dbReference>
<dbReference type="PANTHER" id="PTHR11830">
    <property type="entry name" value="40S RIBOSOMAL PROTEIN S3A"/>
    <property type="match status" value="1"/>
</dbReference>
<dbReference type="Pfam" id="PF01015">
    <property type="entry name" value="Ribosomal_S3Ae"/>
    <property type="match status" value="1"/>
</dbReference>
<dbReference type="SMART" id="SM01397">
    <property type="entry name" value="Ribosomal_S3Ae"/>
    <property type="match status" value="1"/>
</dbReference>
<dbReference type="PROSITE" id="PS01191">
    <property type="entry name" value="RIBOSOMAL_S3AE"/>
    <property type="match status" value="1"/>
</dbReference>